<feature type="chain" id="PRO_0000147995" description="Phosphoglucosamine mutase">
    <location>
        <begin position="1"/>
        <end position="453"/>
    </location>
</feature>
<feature type="active site" description="Phosphoserine intermediate" evidence="1">
    <location>
        <position position="110"/>
    </location>
</feature>
<feature type="binding site" description="via phosphate group" evidence="1">
    <location>
        <position position="110"/>
    </location>
    <ligand>
        <name>Mg(2+)</name>
        <dbReference type="ChEBI" id="CHEBI:18420"/>
    </ligand>
</feature>
<feature type="binding site" evidence="1">
    <location>
        <position position="247"/>
    </location>
    <ligand>
        <name>Mg(2+)</name>
        <dbReference type="ChEBI" id="CHEBI:18420"/>
    </ligand>
</feature>
<feature type="binding site" evidence="1">
    <location>
        <position position="249"/>
    </location>
    <ligand>
        <name>Mg(2+)</name>
        <dbReference type="ChEBI" id="CHEBI:18420"/>
    </ligand>
</feature>
<feature type="binding site" evidence="1">
    <location>
        <position position="251"/>
    </location>
    <ligand>
        <name>Mg(2+)</name>
        <dbReference type="ChEBI" id="CHEBI:18420"/>
    </ligand>
</feature>
<feature type="modified residue" description="Phosphoserine" evidence="1">
    <location>
        <position position="110"/>
    </location>
</feature>
<evidence type="ECO:0000255" key="1">
    <source>
        <dbReference type="HAMAP-Rule" id="MF_01554"/>
    </source>
</evidence>
<protein>
    <recommendedName>
        <fullName evidence="1">Phosphoglucosamine mutase</fullName>
        <ecNumber evidence="1">5.4.2.10</ecNumber>
    </recommendedName>
</protein>
<reference key="1">
    <citation type="journal article" date="2003" name="Genome Res.">
        <title>Tropheryma whipplei twist: a human pathogenic Actinobacteria with a reduced genome.</title>
        <authorList>
            <person name="Raoult D."/>
            <person name="Ogata H."/>
            <person name="Audic S."/>
            <person name="Robert C."/>
            <person name="Suhre K."/>
            <person name="Drancourt M."/>
            <person name="Claverie J.-M."/>
        </authorList>
    </citation>
    <scope>NUCLEOTIDE SEQUENCE [LARGE SCALE GENOMIC DNA]</scope>
    <source>
        <strain>Twist</strain>
    </source>
</reference>
<keyword id="KW-0413">Isomerase</keyword>
<keyword id="KW-0460">Magnesium</keyword>
<keyword id="KW-0479">Metal-binding</keyword>
<keyword id="KW-0597">Phosphoprotein</keyword>
<keyword id="KW-1185">Reference proteome</keyword>
<dbReference type="EC" id="5.4.2.10" evidence="1"/>
<dbReference type="EMBL" id="AE014184">
    <property type="protein sequence ID" value="AAO44243.1"/>
    <property type="molecule type" value="Genomic_DNA"/>
</dbReference>
<dbReference type="RefSeq" id="WP_011096116.1">
    <property type="nucleotide sequence ID" value="NC_004572.3"/>
</dbReference>
<dbReference type="SMR" id="Q83GU5"/>
<dbReference type="STRING" id="203267.TWT_146"/>
<dbReference type="GeneID" id="67387929"/>
<dbReference type="KEGG" id="twh:TWT_146"/>
<dbReference type="eggNOG" id="COG1109">
    <property type="taxonomic scope" value="Bacteria"/>
</dbReference>
<dbReference type="HOGENOM" id="CLU_016950_7_0_11"/>
<dbReference type="OrthoDB" id="9803322at2"/>
<dbReference type="Proteomes" id="UP000002200">
    <property type="component" value="Chromosome"/>
</dbReference>
<dbReference type="GO" id="GO:0005829">
    <property type="term" value="C:cytosol"/>
    <property type="evidence" value="ECO:0007669"/>
    <property type="project" value="TreeGrafter"/>
</dbReference>
<dbReference type="GO" id="GO:0000287">
    <property type="term" value="F:magnesium ion binding"/>
    <property type="evidence" value="ECO:0007669"/>
    <property type="project" value="UniProtKB-UniRule"/>
</dbReference>
<dbReference type="GO" id="GO:0008966">
    <property type="term" value="F:phosphoglucosamine mutase activity"/>
    <property type="evidence" value="ECO:0007669"/>
    <property type="project" value="UniProtKB-UniRule"/>
</dbReference>
<dbReference type="GO" id="GO:0004615">
    <property type="term" value="F:phosphomannomutase activity"/>
    <property type="evidence" value="ECO:0007669"/>
    <property type="project" value="TreeGrafter"/>
</dbReference>
<dbReference type="GO" id="GO:0005975">
    <property type="term" value="P:carbohydrate metabolic process"/>
    <property type="evidence" value="ECO:0007669"/>
    <property type="project" value="InterPro"/>
</dbReference>
<dbReference type="GO" id="GO:0009252">
    <property type="term" value="P:peptidoglycan biosynthetic process"/>
    <property type="evidence" value="ECO:0007669"/>
    <property type="project" value="TreeGrafter"/>
</dbReference>
<dbReference type="GO" id="GO:0006048">
    <property type="term" value="P:UDP-N-acetylglucosamine biosynthetic process"/>
    <property type="evidence" value="ECO:0007669"/>
    <property type="project" value="TreeGrafter"/>
</dbReference>
<dbReference type="CDD" id="cd05802">
    <property type="entry name" value="GlmM"/>
    <property type="match status" value="1"/>
</dbReference>
<dbReference type="FunFam" id="3.40.120.10:FF:000001">
    <property type="entry name" value="Phosphoglucosamine mutase"/>
    <property type="match status" value="1"/>
</dbReference>
<dbReference type="FunFam" id="3.40.120.10:FF:000002">
    <property type="entry name" value="Phosphoglucosamine mutase"/>
    <property type="match status" value="1"/>
</dbReference>
<dbReference type="Gene3D" id="3.40.120.10">
    <property type="entry name" value="Alpha-D-Glucose-1,6-Bisphosphate, subunit A, domain 3"/>
    <property type="match status" value="3"/>
</dbReference>
<dbReference type="Gene3D" id="3.30.310.50">
    <property type="entry name" value="Alpha-D-phosphohexomutase, C-terminal domain"/>
    <property type="match status" value="1"/>
</dbReference>
<dbReference type="HAMAP" id="MF_01554_B">
    <property type="entry name" value="GlmM_B"/>
    <property type="match status" value="1"/>
</dbReference>
<dbReference type="InterPro" id="IPR005844">
    <property type="entry name" value="A-D-PHexomutase_a/b/a-I"/>
</dbReference>
<dbReference type="InterPro" id="IPR016055">
    <property type="entry name" value="A-D-PHexomutase_a/b/a-I/II/III"/>
</dbReference>
<dbReference type="InterPro" id="IPR005845">
    <property type="entry name" value="A-D-PHexomutase_a/b/a-II"/>
</dbReference>
<dbReference type="InterPro" id="IPR005846">
    <property type="entry name" value="A-D-PHexomutase_a/b/a-III"/>
</dbReference>
<dbReference type="InterPro" id="IPR005843">
    <property type="entry name" value="A-D-PHexomutase_C"/>
</dbReference>
<dbReference type="InterPro" id="IPR036900">
    <property type="entry name" value="A-D-PHexomutase_C_sf"/>
</dbReference>
<dbReference type="InterPro" id="IPR016066">
    <property type="entry name" value="A-D-PHexomutase_CS"/>
</dbReference>
<dbReference type="InterPro" id="IPR005841">
    <property type="entry name" value="Alpha-D-phosphohexomutase_SF"/>
</dbReference>
<dbReference type="InterPro" id="IPR006352">
    <property type="entry name" value="GlmM_bact"/>
</dbReference>
<dbReference type="InterPro" id="IPR050060">
    <property type="entry name" value="Phosphoglucosamine_mutase"/>
</dbReference>
<dbReference type="NCBIfam" id="TIGR01455">
    <property type="entry name" value="glmM"/>
    <property type="match status" value="1"/>
</dbReference>
<dbReference type="PANTHER" id="PTHR42946:SF1">
    <property type="entry name" value="PHOSPHOGLUCOMUTASE (ALPHA-D-GLUCOSE-1,6-BISPHOSPHATE-DEPENDENT)"/>
    <property type="match status" value="1"/>
</dbReference>
<dbReference type="PANTHER" id="PTHR42946">
    <property type="entry name" value="PHOSPHOHEXOSE MUTASE"/>
    <property type="match status" value="1"/>
</dbReference>
<dbReference type="Pfam" id="PF02878">
    <property type="entry name" value="PGM_PMM_I"/>
    <property type="match status" value="1"/>
</dbReference>
<dbReference type="Pfam" id="PF02879">
    <property type="entry name" value="PGM_PMM_II"/>
    <property type="match status" value="1"/>
</dbReference>
<dbReference type="Pfam" id="PF02880">
    <property type="entry name" value="PGM_PMM_III"/>
    <property type="match status" value="1"/>
</dbReference>
<dbReference type="Pfam" id="PF00408">
    <property type="entry name" value="PGM_PMM_IV"/>
    <property type="match status" value="1"/>
</dbReference>
<dbReference type="PRINTS" id="PR00509">
    <property type="entry name" value="PGMPMM"/>
</dbReference>
<dbReference type="SUPFAM" id="SSF55957">
    <property type="entry name" value="Phosphoglucomutase, C-terminal domain"/>
    <property type="match status" value="1"/>
</dbReference>
<dbReference type="SUPFAM" id="SSF53738">
    <property type="entry name" value="Phosphoglucomutase, first 3 domains"/>
    <property type="match status" value="3"/>
</dbReference>
<dbReference type="PROSITE" id="PS00710">
    <property type="entry name" value="PGM_PMM"/>
    <property type="match status" value="1"/>
</dbReference>
<proteinExistence type="inferred from homology"/>
<accession>Q83GU5</accession>
<gene>
    <name evidence="1" type="primary">glmM</name>
    <name type="ordered locus">TWT_146</name>
</gene>
<comment type="function">
    <text evidence="1">Catalyzes the conversion of glucosamine-6-phosphate to glucosamine-1-phosphate.</text>
</comment>
<comment type="catalytic activity">
    <reaction evidence="1">
        <text>alpha-D-glucosamine 1-phosphate = D-glucosamine 6-phosphate</text>
        <dbReference type="Rhea" id="RHEA:23424"/>
        <dbReference type="ChEBI" id="CHEBI:58516"/>
        <dbReference type="ChEBI" id="CHEBI:58725"/>
        <dbReference type="EC" id="5.4.2.10"/>
    </reaction>
</comment>
<comment type="cofactor">
    <cofactor evidence="1">
        <name>Mg(2+)</name>
        <dbReference type="ChEBI" id="CHEBI:18420"/>
    </cofactor>
    <text evidence="1">Binds 1 Mg(2+) ion per subunit.</text>
</comment>
<comment type="PTM">
    <text evidence="1">Activated by phosphorylation.</text>
</comment>
<comment type="similarity">
    <text evidence="1">Belongs to the phosphohexose mutase family.</text>
</comment>
<sequence length="453" mass="48455">MARLFGTDGIRALANGDLLTPELAMAVARAAAVVFTHGRVAKRRQVLGKRPVAIVARDPRISGDFLVAAISAGLASSGVDVLDAGVIPTPAVAFLVKNANADFGFMISASHNPGYDNGVKIFAHGGVKLPDVVEDRIEYFLDKQKLSPIGSKVGRITRFVDAEDRYQMHLLSTLFTRIDGVKVVIDCANGAASGVSPDVFKSAGAAVKVICADPNGVNINDGVGSAYPERLRAEVIRNSATLGLAFDGDADRCIAVDSNGNTVDGDQIMAILARSMQQRGTLRNKTLVTTIMSNIGLDRAMKKLGINLKRTQVGDRYVIEAMTQGGFNIGGEQSGHIILSDYSTAGDGILAGLHLCAEIIRTGKSLTDLASIMEIVPQVTANIETDDPTTLLNNKKIRHEISRIEKSLKGRVVIRPSGTEPLIRIMVEDLNPEKAERACSHLADFFKQEIQKS</sequence>
<organism>
    <name type="scientific">Tropheryma whipplei (strain Twist)</name>
    <name type="common">Whipple's bacillus</name>
    <dbReference type="NCBI Taxonomy" id="203267"/>
    <lineage>
        <taxon>Bacteria</taxon>
        <taxon>Bacillati</taxon>
        <taxon>Actinomycetota</taxon>
        <taxon>Actinomycetes</taxon>
        <taxon>Micrococcales</taxon>
        <taxon>Tropherymataceae</taxon>
        <taxon>Tropheryma</taxon>
    </lineage>
</organism>
<name>GLMM_TROWT</name>